<proteinExistence type="predicted"/>
<keyword id="KW-1185">Reference proteome</keyword>
<feature type="chain" id="PRO_0000106772" description="Uncharacterized protein MJ0284">
    <location>
        <begin position="1"/>
        <end position="219"/>
    </location>
</feature>
<organism>
    <name type="scientific">Methanocaldococcus jannaschii (strain ATCC 43067 / DSM 2661 / JAL-1 / JCM 10045 / NBRC 100440)</name>
    <name type="common">Methanococcus jannaschii</name>
    <dbReference type="NCBI Taxonomy" id="243232"/>
    <lineage>
        <taxon>Archaea</taxon>
        <taxon>Methanobacteriati</taxon>
        <taxon>Methanobacteriota</taxon>
        <taxon>Methanomada group</taxon>
        <taxon>Methanococci</taxon>
        <taxon>Methanococcales</taxon>
        <taxon>Methanocaldococcaceae</taxon>
        <taxon>Methanocaldococcus</taxon>
    </lineage>
</organism>
<gene>
    <name type="ordered locus">MJ0284</name>
</gene>
<dbReference type="EMBL" id="L77117">
    <property type="protein sequence ID" value="AAB98272.1"/>
    <property type="molecule type" value="Genomic_DNA"/>
</dbReference>
<dbReference type="PIR" id="E64335">
    <property type="entry name" value="E64335"/>
</dbReference>
<dbReference type="RefSeq" id="WP_010869782.1">
    <property type="nucleotide sequence ID" value="NC_000909.1"/>
</dbReference>
<dbReference type="SMR" id="Q57732"/>
<dbReference type="FunCoup" id="Q57732">
    <property type="interactions" value="82"/>
</dbReference>
<dbReference type="STRING" id="243232.MJ_0284"/>
<dbReference type="PaxDb" id="243232-MJ_0284"/>
<dbReference type="EnsemblBacteria" id="AAB98272">
    <property type="protein sequence ID" value="AAB98272"/>
    <property type="gene ID" value="MJ_0284"/>
</dbReference>
<dbReference type="GeneID" id="1451139"/>
<dbReference type="KEGG" id="mja:MJ_0284"/>
<dbReference type="eggNOG" id="arCOG00910">
    <property type="taxonomic scope" value="Archaea"/>
</dbReference>
<dbReference type="HOGENOM" id="CLU_074702_1_0_2"/>
<dbReference type="InParanoid" id="Q57732"/>
<dbReference type="OrthoDB" id="31271at2157"/>
<dbReference type="PhylomeDB" id="Q57732"/>
<dbReference type="Proteomes" id="UP000000805">
    <property type="component" value="Chromosome"/>
</dbReference>
<dbReference type="GO" id="GO:0016740">
    <property type="term" value="F:transferase activity"/>
    <property type="evidence" value="ECO:0000318"/>
    <property type="project" value="GO_Central"/>
</dbReference>
<dbReference type="GO" id="GO:0009058">
    <property type="term" value="P:biosynthetic process"/>
    <property type="evidence" value="ECO:0007669"/>
    <property type="project" value="UniProtKB-ARBA"/>
</dbReference>
<dbReference type="CDD" id="cd02440">
    <property type="entry name" value="AdoMet_MTases"/>
    <property type="match status" value="1"/>
</dbReference>
<dbReference type="Gene3D" id="3.40.50.150">
    <property type="entry name" value="Vaccinia Virus protein VP39"/>
    <property type="match status" value="1"/>
</dbReference>
<dbReference type="InterPro" id="IPR051720">
    <property type="entry name" value="rRNA_MeTrfase/Polyamine_Synth"/>
</dbReference>
<dbReference type="InterPro" id="IPR029063">
    <property type="entry name" value="SAM-dependent_MTases_sf"/>
</dbReference>
<dbReference type="PANTHER" id="PTHR23290">
    <property type="entry name" value="RRNA N6-ADENOSINE-METHYLTRANSFERASE METTL5"/>
    <property type="match status" value="1"/>
</dbReference>
<dbReference type="PANTHER" id="PTHR23290:SF0">
    <property type="entry name" value="RRNA N6-ADENOSINE-METHYLTRANSFERASE METTL5"/>
    <property type="match status" value="1"/>
</dbReference>
<dbReference type="Pfam" id="PF06325">
    <property type="entry name" value="PrmA"/>
    <property type="match status" value="1"/>
</dbReference>
<dbReference type="SUPFAM" id="SSF53335">
    <property type="entry name" value="S-adenosyl-L-methionine-dependent methyltransferases"/>
    <property type="match status" value="1"/>
</dbReference>
<dbReference type="PROSITE" id="PS00092">
    <property type="entry name" value="N6_MTASE"/>
    <property type="match status" value="1"/>
</dbReference>
<reference key="1">
    <citation type="journal article" date="1996" name="Science">
        <title>Complete genome sequence of the methanogenic archaeon, Methanococcus jannaschii.</title>
        <authorList>
            <person name="Bult C.J."/>
            <person name="White O."/>
            <person name="Olsen G.J."/>
            <person name="Zhou L."/>
            <person name="Fleischmann R.D."/>
            <person name="Sutton G.G."/>
            <person name="Blake J.A."/>
            <person name="FitzGerald L.M."/>
            <person name="Clayton R.A."/>
            <person name="Gocayne J.D."/>
            <person name="Kerlavage A.R."/>
            <person name="Dougherty B.A."/>
            <person name="Tomb J.-F."/>
            <person name="Adams M.D."/>
            <person name="Reich C.I."/>
            <person name="Overbeek R."/>
            <person name="Kirkness E.F."/>
            <person name="Weinstock K.G."/>
            <person name="Merrick J.M."/>
            <person name="Glodek A."/>
            <person name="Scott J.L."/>
            <person name="Geoghagen N.S.M."/>
            <person name="Weidman J.F."/>
            <person name="Fuhrmann J.L."/>
            <person name="Nguyen D."/>
            <person name="Utterback T.R."/>
            <person name="Kelley J.M."/>
            <person name="Peterson J.D."/>
            <person name="Sadow P.W."/>
            <person name="Hanna M.C."/>
            <person name="Cotton M.D."/>
            <person name="Roberts K.M."/>
            <person name="Hurst M.A."/>
            <person name="Kaine B.P."/>
            <person name="Borodovsky M."/>
            <person name="Klenk H.-P."/>
            <person name="Fraser C.M."/>
            <person name="Smith H.O."/>
            <person name="Woese C.R."/>
            <person name="Venter J.C."/>
        </authorList>
    </citation>
    <scope>NUCLEOTIDE SEQUENCE [LARGE SCALE GENOMIC DNA]</scope>
    <source>
        <strain>ATCC 43067 / DSM 2661 / JAL-1 / JCM 10045 / NBRC 100440</strain>
    </source>
</reference>
<accession>Q57732</accession>
<name>Y284_METJA</name>
<sequence length="219" mass="25139">MIKKKHLEMMLDSLKRHPNPKADLEQYTIDGKLAADILFFAVNDFYNNVVIDLGCGTGRLAIGSKILGAKRAIGIDIDRESIEAAKENAKKLNVDVDFYCMDIRDVDDEFLNNVLGEDRDLKRVVIQNPPFGAQKKHADRVFLDKALEIGDIIYTIHNYPTKDFVIKYVEDKGGKITHIYEAFFRIPAIYEFHKKKVVEIPVVIFRIEKLGFETVFNFL</sequence>
<protein>
    <recommendedName>
        <fullName>Uncharacterized protein MJ0284</fullName>
    </recommendedName>
</protein>